<protein>
    <recommendedName>
        <fullName evidence="1">Glucose-6-phosphate isomerase</fullName>
        <shortName evidence="1">GPI</shortName>
        <ecNumber evidence="1">5.3.1.9</ecNumber>
    </recommendedName>
    <alternativeName>
        <fullName evidence="1">Phosphoglucose isomerase</fullName>
        <shortName evidence="1">PGI</shortName>
    </alternativeName>
    <alternativeName>
        <fullName evidence="1">Phosphohexose isomerase</fullName>
        <shortName evidence="1">PHI</shortName>
    </alternativeName>
</protein>
<feature type="chain" id="PRO_1000013958" description="Glucose-6-phosphate isomerase">
    <location>
        <begin position="1"/>
        <end position="450"/>
    </location>
</feature>
<feature type="active site" description="Proton donor" evidence="1">
    <location>
        <position position="291"/>
    </location>
</feature>
<feature type="active site" evidence="1">
    <location>
        <position position="312"/>
    </location>
</feature>
<feature type="active site" evidence="1">
    <location>
        <position position="426"/>
    </location>
</feature>
<proteinExistence type="inferred from homology"/>
<keyword id="KW-0963">Cytoplasm</keyword>
<keyword id="KW-0312">Gluconeogenesis</keyword>
<keyword id="KW-0324">Glycolysis</keyword>
<keyword id="KW-0413">Isomerase</keyword>
<gene>
    <name evidence="1" type="primary">pgi</name>
    <name type="ordered locus">CPF_2549</name>
</gene>
<reference key="1">
    <citation type="journal article" date="2006" name="Genome Res.">
        <title>Skewed genomic variability in strains of the toxigenic bacterial pathogen, Clostridium perfringens.</title>
        <authorList>
            <person name="Myers G.S.A."/>
            <person name="Rasko D.A."/>
            <person name="Cheung J.K."/>
            <person name="Ravel J."/>
            <person name="Seshadri R."/>
            <person name="DeBoy R.T."/>
            <person name="Ren Q."/>
            <person name="Varga J."/>
            <person name="Awad M.M."/>
            <person name="Brinkac L.M."/>
            <person name="Daugherty S.C."/>
            <person name="Haft D.H."/>
            <person name="Dodson R.J."/>
            <person name="Madupu R."/>
            <person name="Nelson W.C."/>
            <person name="Rosovitz M.J."/>
            <person name="Sullivan S.A."/>
            <person name="Khouri H."/>
            <person name="Dimitrov G.I."/>
            <person name="Watkins K.L."/>
            <person name="Mulligan S."/>
            <person name="Benton J."/>
            <person name="Radune D."/>
            <person name="Fisher D.J."/>
            <person name="Atkins H.S."/>
            <person name="Hiscox T."/>
            <person name="Jost B.H."/>
            <person name="Billington S.J."/>
            <person name="Songer J.G."/>
            <person name="McClane B.A."/>
            <person name="Titball R.W."/>
            <person name="Rood J.I."/>
            <person name="Melville S.B."/>
            <person name="Paulsen I.T."/>
        </authorList>
    </citation>
    <scope>NUCLEOTIDE SEQUENCE [LARGE SCALE GENOMIC DNA]</scope>
    <source>
        <strain>ATCC 13124 / DSM 756 / JCM 1290 / NCIMB 6125 / NCTC 8237 / S 107 / Type A</strain>
    </source>
</reference>
<evidence type="ECO:0000255" key="1">
    <source>
        <dbReference type="HAMAP-Rule" id="MF_00473"/>
    </source>
</evidence>
<comment type="function">
    <text evidence="1">Catalyzes the reversible isomerization of glucose-6-phosphate to fructose-6-phosphate.</text>
</comment>
<comment type="catalytic activity">
    <reaction evidence="1">
        <text>alpha-D-glucose 6-phosphate = beta-D-fructose 6-phosphate</text>
        <dbReference type="Rhea" id="RHEA:11816"/>
        <dbReference type="ChEBI" id="CHEBI:57634"/>
        <dbReference type="ChEBI" id="CHEBI:58225"/>
        <dbReference type="EC" id="5.3.1.9"/>
    </reaction>
</comment>
<comment type="pathway">
    <text evidence="1">Carbohydrate biosynthesis; gluconeogenesis.</text>
</comment>
<comment type="pathway">
    <text evidence="1">Carbohydrate degradation; glycolysis; D-glyceraldehyde 3-phosphate and glycerone phosphate from D-glucose: step 2/4.</text>
</comment>
<comment type="subcellular location">
    <subcellularLocation>
        <location evidence="1">Cytoplasm</location>
    </subcellularLocation>
</comment>
<comment type="similarity">
    <text evidence="1">Belongs to the GPI family.</text>
</comment>
<dbReference type="EC" id="5.3.1.9" evidence="1"/>
<dbReference type="EMBL" id="CP000246">
    <property type="protein sequence ID" value="ABG82971.1"/>
    <property type="molecule type" value="Genomic_DNA"/>
</dbReference>
<dbReference type="RefSeq" id="WP_003462349.1">
    <property type="nucleotide sequence ID" value="NC_008261.1"/>
</dbReference>
<dbReference type="SMR" id="Q0TN51"/>
<dbReference type="STRING" id="195103.CPF_2549"/>
<dbReference type="PaxDb" id="195103-CPF_2549"/>
<dbReference type="KEGG" id="cpf:CPF_2549"/>
<dbReference type="eggNOG" id="COG0166">
    <property type="taxonomic scope" value="Bacteria"/>
</dbReference>
<dbReference type="HOGENOM" id="CLU_037303_0_1_9"/>
<dbReference type="UniPathway" id="UPA00109">
    <property type="reaction ID" value="UER00181"/>
</dbReference>
<dbReference type="UniPathway" id="UPA00138"/>
<dbReference type="Proteomes" id="UP000001823">
    <property type="component" value="Chromosome"/>
</dbReference>
<dbReference type="GO" id="GO:0005829">
    <property type="term" value="C:cytosol"/>
    <property type="evidence" value="ECO:0007669"/>
    <property type="project" value="TreeGrafter"/>
</dbReference>
<dbReference type="GO" id="GO:0097367">
    <property type="term" value="F:carbohydrate derivative binding"/>
    <property type="evidence" value="ECO:0007669"/>
    <property type="project" value="InterPro"/>
</dbReference>
<dbReference type="GO" id="GO:0004347">
    <property type="term" value="F:glucose-6-phosphate isomerase activity"/>
    <property type="evidence" value="ECO:0007669"/>
    <property type="project" value="UniProtKB-UniRule"/>
</dbReference>
<dbReference type="GO" id="GO:0048029">
    <property type="term" value="F:monosaccharide binding"/>
    <property type="evidence" value="ECO:0007669"/>
    <property type="project" value="TreeGrafter"/>
</dbReference>
<dbReference type="GO" id="GO:0006094">
    <property type="term" value="P:gluconeogenesis"/>
    <property type="evidence" value="ECO:0007669"/>
    <property type="project" value="UniProtKB-UniRule"/>
</dbReference>
<dbReference type="GO" id="GO:0051156">
    <property type="term" value="P:glucose 6-phosphate metabolic process"/>
    <property type="evidence" value="ECO:0007669"/>
    <property type="project" value="TreeGrafter"/>
</dbReference>
<dbReference type="GO" id="GO:0006096">
    <property type="term" value="P:glycolytic process"/>
    <property type="evidence" value="ECO:0007669"/>
    <property type="project" value="UniProtKB-UniRule"/>
</dbReference>
<dbReference type="CDD" id="cd05015">
    <property type="entry name" value="SIS_PGI_1"/>
    <property type="match status" value="1"/>
</dbReference>
<dbReference type="CDD" id="cd05016">
    <property type="entry name" value="SIS_PGI_2"/>
    <property type="match status" value="1"/>
</dbReference>
<dbReference type="FunFam" id="3.40.50.10490:FF:000015">
    <property type="entry name" value="Glucose-6-phosphate isomerase"/>
    <property type="match status" value="1"/>
</dbReference>
<dbReference type="FunFam" id="3.40.50.10490:FF:000016">
    <property type="entry name" value="Glucose-6-phosphate isomerase"/>
    <property type="match status" value="1"/>
</dbReference>
<dbReference type="Gene3D" id="3.40.50.10490">
    <property type="entry name" value="Glucose-6-phosphate isomerase like protein, domain 1"/>
    <property type="match status" value="3"/>
</dbReference>
<dbReference type="HAMAP" id="MF_00473">
    <property type="entry name" value="G6P_isomerase"/>
    <property type="match status" value="1"/>
</dbReference>
<dbReference type="InterPro" id="IPR001672">
    <property type="entry name" value="G6P_Isomerase"/>
</dbReference>
<dbReference type="InterPro" id="IPR018189">
    <property type="entry name" value="Phosphoglucose_isomerase_CS"/>
</dbReference>
<dbReference type="InterPro" id="IPR046348">
    <property type="entry name" value="SIS_dom_sf"/>
</dbReference>
<dbReference type="InterPro" id="IPR035476">
    <property type="entry name" value="SIS_PGI_1"/>
</dbReference>
<dbReference type="InterPro" id="IPR035482">
    <property type="entry name" value="SIS_PGI_2"/>
</dbReference>
<dbReference type="NCBIfam" id="NF010697">
    <property type="entry name" value="PRK14097.1"/>
    <property type="match status" value="1"/>
</dbReference>
<dbReference type="PANTHER" id="PTHR11469">
    <property type="entry name" value="GLUCOSE-6-PHOSPHATE ISOMERASE"/>
    <property type="match status" value="1"/>
</dbReference>
<dbReference type="PANTHER" id="PTHR11469:SF1">
    <property type="entry name" value="GLUCOSE-6-PHOSPHATE ISOMERASE"/>
    <property type="match status" value="1"/>
</dbReference>
<dbReference type="Pfam" id="PF00342">
    <property type="entry name" value="PGI"/>
    <property type="match status" value="1"/>
</dbReference>
<dbReference type="PRINTS" id="PR00662">
    <property type="entry name" value="G6PISOMERASE"/>
</dbReference>
<dbReference type="SUPFAM" id="SSF53697">
    <property type="entry name" value="SIS domain"/>
    <property type="match status" value="1"/>
</dbReference>
<dbReference type="PROSITE" id="PS00765">
    <property type="entry name" value="P_GLUCOSE_ISOMERASE_1"/>
    <property type="match status" value="1"/>
</dbReference>
<dbReference type="PROSITE" id="PS00174">
    <property type="entry name" value="P_GLUCOSE_ISOMERASE_2"/>
    <property type="match status" value="1"/>
</dbReference>
<dbReference type="PROSITE" id="PS51463">
    <property type="entry name" value="P_GLUCOSE_ISOMERASE_3"/>
    <property type="match status" value="1"/>
</dbReference>
<organism>
    <name type="scientific">Clostridium perfringens (strain ATCC 13124 / DSM 756 / JCM 1290 / NCIMB 6125 / NCTC 8237 / Type A)</name>
    <dbReference type="NCBI Taxonomy" id="195103"/>
    <lineage>
        <taxon>Bacteria</taxon>
        <taxon>Bacillati</taxon>
        <taxon>Bacillota</taxon>
        <taxon>Clostridia</taxon>
        <taxon>Eubacteriales</taxon>
        <taxon>Clostridiaceae</taxon>
        <taxon>Clostridium</taxon>
    </lineage>
</organism>
<name>G6PI_CLOP1</name>
<sequence>MKKGLVVDLSKAAPYLKSHEVAYMQETINQAHNKLHNGTGAGNDFLGWVDLPVNYDKDEFARIKEAAKKIQSDSDVLVVIGIGGSYLGARAAIEMLTNNFYNSMSKDKRKTPAIFYAGNNISSSYMADLLKAIDGLDVSLNVISKSGTTTEPAIAFRILKDYMEKKYGKEEAKKRIYATTDAKKGALKTLADAEGYETFVIPDDVGGRFSVLTAVGLLPIAAAGINIDEMMEGAADAREEYANPSLADNECYKYAAARNALYNKGKAIEILVNYEPSVHYFNEWWKQLYGESEGKDNKGLFPAAVDFSTDLHSMGQYIQEGRRDIFETVINVGSPREEIVIEANDENIDGLNFLAGKTMDYVNKQAFRGTLLAHNDGEVPNVVVNVPELTPYYFGRLVYFFEKACGISGYVLGINPFDQPGVEAYKKNMFALLGKPGFEDLKAELEERLK</sequence>
<accession>Q0TN51</accession>